<feature type="chain" id="PRO_1000197698" description="Succinate--CoA ligase [ADP-forming] subunit beta">
    <location>
        <begin position="1"/>
        <end position="386"/>
    </location>
</feature>
<feature type="domain" description="ATP-grasp" evidence="1">
    <location>
        <begin position="9"/>
        <end position="244"/>
    </location>
</feature>
<feature type="binding site" evidence="1">
    <location>
        <position position="46"/>
    </location>
    <ligand>
        <name>ATP</name>
        <dbReference type="ChEBI" id="CHEBI:30616"/>
    </ligand>
</feature>
<feature type="binding site" evidence="1">
    <location>
        <begin position="53"/>
        <end position="55"/>
    </location>
    <ligand>
        <name>ATP</name>
        <dbReference type="ChEBI" id="CHEBI:30616"/>
    </ligand>
</feature>
<feature type="binding site" evidence="1">
    <location>
        <position position="99"/>
    </location>
    <ligand>
        <name>ATP</name>
        <dbReference type="ChEBI" id="CHEBI:30616"/>
    </ligand>
</feature>
<feature type="binding site" evidence="1">
    <location>
        <position position="102"/>
    </location>
    <ligand>
        <name>ATP</name>
        <dbReference type="ChEBI" id="CHEBI:30616"/>
    </ligand>
</feature>
<feature type="binding site" evidence="1">
    <location>
        <position position="107"/>
    </location>
    <ligand>
        <name>ATP</name>
        <dbReference type="ChEBI" id="CHEBI:30616"/>
    </ligand>
</feature>
<feature type="binding site" evidence="1">
    <location>
        <position position="199"/>
    </location>
    <ligand>
        <name>Mg(2+)</name>
        <dbReference type="ChEBI" id="CHEBI:18420"/>
    </ligand>
</feature>
<feature type="binding site" evidence="1">
    <location>
        <position position="213"/>
    </location>
    <ligand>
        <name>Mg(2+)</name>
        <dbReference type="ChEBI" id="CHEBI:18420"/>
    </ligand>
</feature>
<feature type="binding site" evidence="1">
    <location>
        <position position="264"/>
    </location>
    <ligand>
        <name>substrate</name>
        <note>ligand shared with subunit alpha</note>
    </ligand>
</feature>
<feature type="binding site" evidence="1">
    <location>
        <begin position="321"/>
        <end position="323"/>
    </location>
    <ligand>
        <name>substrate</name>
        <note>ligand shared with subunit alpha</note>
    </ligand>
</feature>
<reference key="1">
    <citation type="submission" date="2005-03" db="EMBL/GenBank/DDBJ databases">
        <title>Brevibacillus brevis strain 47, complete genome.</title>
        <authorList>
            <person name="Hosoyama A."/>
            <person name="Yamada R."/>
            <person name="Hongo Y."/>
            <person name="Terui Y."/>
            <person name="Ankai A."/>
            <person name="Masuyama W."/>
            <person name="Sekiguchi M."/>
            <person name="Takeda T."/>
            <person name="Asano K."/>
            <person name="Ohji S."/>
            <person name="Ichikawa N."/>
            <person name="Narita S."/>
            <person name="Aoki N."/>
            <person name="Miura H."/>
            <person name="Matsushita S."/>
            <person name="Sekigawa T."/>
            <person name="Yamagata H."/>
            <person name="Yoshikawa H."/>
            <person name="Udaka S."/>
            <person name="Tanikawa S."/>
            <person name="Fujita N."/>
        </authorList>
    </citation>
    <scope>NUCLEOTIDE SEQUENCE [LARGE SCALE GENOMIC DNA]</scope>
    <source>
        <strain>47 / JCM 6285 / NBRC 100599</strain>
    </source>
</reference>
<evidence type="ECO:0000255" key="1">
    <source>
        <dbReference type="HAMAP-Rule" id="MF_00558"/>
    </source>
</evidence>
<accession>C0ZFB3</accession>
<comment type="function">
    <text evidence="1">Succinyl-CoA synthetase functions in the citric acid cycle (TCA), coupling the hydrolysis of succinyl-CoA to the synthesis of either ATP or GTP and thus represents the only step of substrate-level phosphorylation in the TCA. The beta subunit provides nucleotide specificity of the enzyme and binds the substrate succinate, while the binding sites for coenzyme A and phosphate are found in the alpha subunit.</text>
</comment>
<comment type="catalytic activity">
    <reaction evidence="1">
        <text>succinate + ATP + CoA = succinyl-CoA + ADP + phosphate</text>
        <dbReference type="Rhea" id="RHEA:17661"/>
        <dbReference type="ChEBI" id="CHEBI:30031"/>
        <dbReference type="ChEBI" id="CHEBI:30616"/>
        <dbReference type="ChEBI" id="CHEBI:43474"/>
        <dbReference type="ChEBI" id="CHEBI:57287"/>
        <dbReference type="ChEBI" id="CHEBI:57292"/>
        <dbReference type="ChEBI" id="CHEBI:456216"/>
        <dbReference type="EC" id="6.2.1.5"/>
    </reaction>
    <physiologicalReaction direction="right-to-left" evidence="1">
        <dbReference type="Rhea" id="RHEA:17663"/>
    </physiologicalReaction>
</comment>
<comment type="catalytic activity">
    <reaction evidence="1">
        <text>GTP + succinate + CoA = succinyl-CoA + GDP + phosphate</text>
        <dbReference type="Rhea" id="RHEA:22120"/>
        <dbReference type="ChEBI" id="CHEBI:30031"/>
        <dbReference type="ChEBI" id="CHEBI:37565"/>
        <dbReference type="ChEBI" id="CHEBI:43474"/>
        <dbReference type="ChEBI" id="CHEBI:57287"/>
        <dbReference type="ChEBI" id="CHEBI:57292"/>
        <dbReference type="ChEBI" id="CHEBI:58189"/>
    </reaction>
    <physiologicalReaction direction="right-to-left" evidence="1">
        <dbReference type="Rhea" id="RHEA:22122"/>
    </physiologicalReaction>
</comment>
<comment type="cofactor">
    <cofactor evidence="1">
        <name>Mg(2+)</name>
        <dbReference type="ChEBI" id="CHEBI:18420"/>
    </cofactor>
    <text evidence="1">Binds 1 Mg(2+) ion per subunit.</text>
</comment>
<comment type="pathway">
    <text evidence="1">Carbohydrate metabolism; tricarboxylic acid cycle; succinate from succinyl-CoA (ligase route): step 1/1.</text>
</comment>
<comment type="subunit">
    <text evidence="1">Heterotetramer of two alpha and two beta subunits.</text>
</comment>
<comment type="similarity">
    <text evidence="1">Belongs to the succinate/malate CoA ligase beta subunit family.</text>
</comment>
<protein>
    <recommendedName>
        <fullName evidence="1">Succinate--CoA ligase [ADP-forming] subunit beta</fullName>
        <ecNumber evidence="1">6.2.1.5</ecNumber>
    </recommendedName>
    <alternativeName>
        <fullName evidence="1">Succinyl-CoA synthetase subunit beta</fullName>
        <shortName evidence="1">SCS-beta</shortName>
    </alternativeName>
</protein>
<proteinExistence type="inferred from homology"/>
<sequence>MNIHEYQGKEILKQYGVKVPEGRVAFTVEEAVEAAKELGTQVNVVKAQIHAGGRGKAGGVKVAKNLDEVRTYASEILGKVLVTHQTGPEGKEVKRLLIEQGCDIKKEYYVGVVVDRATGSVVMMASEEGGMDIEEVAANNPEKIFKEVVDPVTGLNGFQARRLAYAINIPKELINKAAKFMMSLYQAFVDKDASIAEINPLVVTGDGEVMALDAKLNFDSNALYRHPDIVALRDLDEEDEKEIEASKFDLSYIALDGNIGCMVNGAGLAMATMDIVKFYGGDPANFLDVGGGATEEKVTEAFKIILRDEKVKGIFVNIFGGIMKCDVIANGVVNAAKQIKLDKPLVVRLEGTNVDLGKKILNESGLNIVAAESMADGAEKIVSLVK</sequence>
<organism>
    <name type="scientific">Brevibacillus brevis (strain 47 / JCM 6285 / NBRC 100599)</name>
    <dbReference type="NCBI Taxonomy" id="358681"/>
    <lineage>
        <taxon>Bacteria</taxon>
        <taxon>Bacillati</taxon>
        <taxon>Bacillota</taxon>
        <taxon>Bacilli</taxon>
        <taxon>Bacillales</taxon>
        <taxon>Paenibacillaceae</taxon>
        <taxon>Brevibacillus</taxon>
    </lineage>
</organism>
<dbReference type="EC" id="6.2.1.5" evidence="1"/>
<dbReference type="EMBL" id="AP008955">
    <property type="protein sequence ID" value="BAH44472.1"/>
    <property type="molecule type" value="Genomic_DNA"/>
</dbReference>
<dbReference type="RefSeq" id="WP_007719385.1">
    <property type="nucleotide sequence ID" value="NC_012491.1"/>
</dbReference>
<dbReference type="SMR" id="C0ZFB3"/>
<dbReference type="STRING" id="358681.BBR47_34950"/>
<dbReference type="GeneID" id="95752286"/>
<dbReference type="KEGG" id="bbe:BBR47_34950"/>
<dbReference type="eggNOG" id="COG0045">
    <property type="taxonomic scope" value="Bacteria"/>
</dbReference>
<dbReference type="HOGENOM" id="CLU_037430_0_2_9"/>
<dbReference type="UniPathway" id="UPA00223">
    <property type="reaction ID" value="UER00999"/>
</dbReference>
<dbReference type="Proteomes" id="UP000001877">
    <property type="component" value="Chromosome"/>
</dbReference>
<dbReference type="GO" id="GO:0005829">
    <property type="term" value="C:cytosol"/>
    <property type="evidence" value="ECO:0007669"/>
    <property type="project" value="TreeGrafter"/>
</dbReference>
<dbReference type="GO" id="GO:0042709">
    <property type="term" value="C:succinate-CoA ligase complex"/>
    <property type="evidence" value="ECO:0007669"/>
    <property type="project" value="TreeGrafter"/>
</dbReference>
<dbReference type="GO" id="GO:0005524">
    <property type="term" value="F:ATP binding"/>
    <property type="evidence" value="ECO:0007669"/>
    <property type="project" value="UniProtKB-UniRule"/>
</dbReference>
<dbReference type="GO" id="GO:0000287">
    <property type="term" value="F:magnesium ion binding"/>
    <property type="evidence" value="ECO:0007669"/>
    <property type="project" value="UniProtKB-UniRule"/>
</dbReference>
<dbReference type="GO" id="GO:0004775">
    <property type="term" value="F:succinate-CoA ligase (ADP-forming) activity"/>
    <property type="evidence" value="ECO:0007669"/>
    <property type="project" value="UniProtKB-UniRule"/>
</dbReference>
<dbReference type="GO" id="GO:0004776">
    <property type="term" value="F:succinate-CoA ligase (GDP-forming) activity"/>
    <property type="evidence" value="ECO:0007669"/>
    <property type="project" value="RHEA"/>
</dbReference>
<dbReference type="GO" id="GO:0006104">
    <property type="term" value="P:succinyl-CoA metabolic process"/>
    <property type="evidence" value="ECO:0007669"/>
    <property type="project" value="TreeGrafter"/>
</dbReference>
<dbReference type="GO" id="GO:0006099">
    <property type="term" value="P:tricarboxylic acid cycle"/>
    <property type="evidence" value="ECO:0007669"/>
    <property type="project" value="UniProtKB-UniRule"/>
</dbReference>
<dbReference type="FunFam" id="3.30.1490.20:FF:000002">
    <property type="entry name" value="Succinate--CoA ligase [ADP-forming] subunit beta"/>
    <property type="match status" value="1"/>
</dbReference>
<dbReference type="FunFam" id="3.30.470.20:FF:000002">
    <property type="entry name" value="Succinate--CoA ligase [ADP-forming] subunit beta"/>
    <property type="match status" value="1"/>
</dbReference>
<dbReference type="FunFam" id="3.40.50.261:FF:000001">
    <property type="entry name" value="Succinate--CoA ligase [ADP-forming] subunit beta"/>
    <property type="match status" value="1"/>
</dbReference>
<dbReference type="Gene3D" id="3.30.1490.20">
    <property type="entry name" value="ATP-grasp fold, A domain"/>
    <property type="match status" value="1"/>
</dbReference>
<dbReference type="Gene3D" id="3.30.470.20">
    <property type="entry name" value="ATP-grasp fold, B domain"/>
    <property type="match status" value="1"/>
</dbReference>
<dbReference type="Gene3D" id="3.40.50.261">
    <property type="entry name" value="Succinyl-CoA synthetase domains"/>
    <property type="match status" value="1"/>
</dbReference>
<dbReference type="HAMAP" id="MF_00558">
    <property type="entry name" value="Succ_CoA_beta"/>
    <property type="match status" value="1"/>
</dbReference>
<dbReference type="InterPro" id="IPR011761">
    <property type="entry name" value="ATP-grasp"/>
</dbReference>
<dbReference type="InterPro" id="IPR013650">
    <property type="entry name" value="ATP-grasp_succ-CoA_synth-type"/>
</dbReference>
<dbReference type="InterPro" id="IPR013815">
    <property type="entry name" value="ATP_grasp_subdomain_1"/>
</dbReference>
<dbReference type="InterPro" id="IPR017866">
    <property type="entry name" value="Succ-CoA_synthase_bsu_CS"/>
</dbReference>
<dbReference type="InterPro" id="IPR005811">
    <property type="entry name" value="SUCC_ACL_C"/>
</dbReference>
<dbReference type="InterPro" id="IPR005809">
    <property type="entry name" value="Succ_CoA_ligase-like_bsu"/>
</dbReference>
<dbReference type="InterPro" id="IPR016102">
    <property type="entry name" value="Succinyl-CoA_synth-like"/>
</dbReference>
<dbReference type="NCBIfam" id="NF001913">
    <property type="entry name" value="PRK00696.1"/>
    <property type="match status" value="1"/>
</dbReference>
<dbReference type="NCBIfam" id="TIGR01016">
    <property type="entry name" value="sucCoAbeta"/>
    <property type="match status" value="1"/>
</dbReference>
<dbReference type="PANTHER" id="PTHR11815:SF10">
    <property type="entry name" value="SUCCINATE--COA LIGASE [GDP-FORMING] SUBUNIT BETA, MITOCHONDRIAL"/>
    <property type="match status" value="1"/>
</dbReference>
<dbReference type="PANTHER" id="PTHR11815">
    <property type="entry name" value="SUCCINYL-COA SYNTHETASE BETA CHAIN"/>
    <property type="match status" value="1"/>
</dbReference>
<dbReference type="Pfam" id="PF08442">
    <property type="entry name" value="ATP-grasp_2"/>
    <property type="match status" value="1"/>
</dbReference>
<dbReference type="Pfam" id="PF00549">
    <property type="entry name" value="Ligase_CoA"/>
    <property type="match status" value="1"/>
</dbReference>
<dbReference type="PIRSF" id="PIRSF001554">
    <property type="entry name" value="SucCS_beta"/>
    <property type="match status" value="1"/>
</dbReference>
<dbReference type="SUPFAM" id="SSF56059">
    <property type="entry name" value="Glutathione synthetase ATP-binding domain-like"/>
    <property type="match status" value="1"/>
</dbReference>
<dbReference type="SUPFAM" id="SSF52210">
    <property type="entry name" value="Succinyl-CoA synthetase domains"/>
    <property type="match status" value="1"/>
</dbReference>
<dbReference type="PROSITE" id="PS50975">
    <property type="entry name" value="ATP_GRASP"/>
    <property type="match status" value="1"/>
</dbReference>
<dbReference type="PROSITE" id="PS01217">
    <property type="entry name" value="SUCCINYL_COA_LIG_3"/>
    <property type="match status" value="1"/>
</dbReference>
<gene>
    <name evidence="1" type="primary">sucC</name>
    <name type="ordered locus">BBR47_34950</name>
</gene>
<keyword id="KW-0067">ATP-binding</keyword>
<keyword id="KW-0436">Ligase</keyword>
<keyword id="KW-0460">Magnesium</keyword>
<keyword id="KW-0479">Metal-binding</keyword>
<keyword id="KW-0547">Nucleotide-binding</keyword>
<keyword id="KW-1185">Reference proteome</keyword>
<keyword id="KW-0816">Tricarboxylic acid cycle</keyword>
<name>SUCC_BREBN</name>